<feature type="chain" id="PRO_0000151021" description="ORC1-type DNA replication protein 1">
    <location>
        <begin position="1"/>
        <end position="398"/>
    </location>
</feature>
<feature type="binding site" evidence="1">
    <location>
        <begin position="67"/>
        <end position="71"/>
    </location>
    <ligand>
        <name>ATP</name>
        <dbReference type="ChEBI" id="CHEBI:30616"/>
    </ligand>
</feature>
<feature type="binding site" evidence="1">
    <location>
        <position position="208"/>
    </location>
    <ligand>
        <name>ATP</name>
        <dbReference type="ChEBI" id="CHEBI:30616"/>
    </ligand>
</feature>
<feature type="binding site" evidence="1">
    <location>
        <position position="220"/>
    </location>
    <ligand>
        <name>ATP</name>
        <dbReference type="ChEBI" id="CHEBI:30616"/>
    </ligand>
</feature>
<gene>
    <name type="primary">cdc6-1</name>
    <name type="ordered locus">STK_03050</name>
</gene>
<accession>Q975X3</accession>
<organism>
    <name type="scientific">Sulfurisphaera tokodaii (strain DSM 16993 / JCM 10545 / NBRC 100140 / 7)</name>
    <name type="common">Sulfolobus tokodaii</name>
    <dbReference type="NCBI Taxonomy" id="273063"/>
    <lineage>
        <taxon>Archaea</taxon>
        <taxon>Thermoproteota</taxon>
        <taxon>Thermoprotei</taxon>
        <taxon>Sulfolobales</taxon>
        <taxon>Sulfolobaceae</taxon>
        <taxon>Sulfurisphaera</taxon>
    </lineage>
</organism>
<dbReference type="EMBL" id="BA000023">
    <property type="protein sequence ID" value="BAB65275.1"/>
    <property type="molecule type" value="Genomic_DNA"/>
</dbReference>
<dbReference type="RefSeq" id="WP_010978258.1">
    <property type="nucleotide sequence ID" value="NC_003106.2"/>
</dbReference>
<dbReference type="SMR" id="Q975X3"/>
<dbReference type="STRING" id="273063.STK_03050"/>
<dbReference type="GeneID" id="1458210"/>
<dbReference type="KEGG" id="sto:STK_03050"/>
<dbReference type="PATRIC" id="fig|273063.9.peg.359"/>
<dbReference type="eggNOG" id="arCOG00467">
    <property type="taxonomic scope" value="Archaea"/>
</dbReference>
<dbReference type="OrthoDB" id="195574at2157"/>
<dbReference type="Proteomes" id="UP000001015">
    <property type="component" value="Chromosome"/>
</dbReference>
<dbReference type="GO" id="GO:0005524">
    <property type="term" value="F:ATP binding"/>
    <property type="evidence" value="ECO:0007669"/>
    <property type="project" value="UniProtKB-UniRule"/>
</dbReference>
<dbReference type="GO" id="GO:0016887">
    <property type="term" value="F:ATP hydrolysis activity"/>
    <property type="evidence" value="ECO:0007669"/>
    <property type="project" value="InterPro"/>
</dbReference>
<dbReference type="GO" id="GO:0006260">
    <property type="term" value="P:DNA replication"/>
    <property type="evidence" value="ECO:0007669"/>
    <property type="project" value="UniProtKB-UniRule"/>
</dbReference>
<dbReference type="CDD" id="cd00009">
    <property type="entry name" value="AAA"/>
    <property type="match status" value="1"/>
</dbReference>
<dbReference type="CDD" id="cd08768">
    <property type="entry name" value="Cdc6_C"/>
    <property type="match status" value="1"/>
</dbReference>
<dbReference type="CDD" id="cd18139">
    <property type="entry name" value="HLD_clamp_RarA"/>
    <property type="match status" value="1"/>
</dbReference>
<dbReference type="FunFam" id="1.10.8.60:FF:000073">
    <property type="entry name" value="ORC1-type DNA replication protein"/>
    <property type="match status" value="1"/>
</dbReference>
<dbReference type="FunFam" id="3.40.50.300:FF:000930">
    <property type="entry name" value="ORC1-type DNA replication protein"/>
    <property type="match status" value="1"/>
</dbReference>
<dbReference type="Gene3D" id="1.10.8.60">
    <property type="match status" value="1"/>
</dbReference>
<dbReference type="Gene3D" id="3.40.50.300">
    <property type="entry name" value="P-loop containing nucleotide triphosphate hydrolases"/>
    <property type="match status" value="1"/>
</dbReference>
<dbReference type="Gene3D" id="1.10.10.10">
    <property type="entry name" value="Winged helix-like DNA-binding domain superfamily/Winged helix DNA-binding domain"/>
    <property type="match status" value="1"/>
</dbReference>
<dbReference type="HAMAP" id="MF_01407">
    <property type="entry name" value="ORC1_type_DNA_replic_protein"/>
    <property type="match status" value="1"/>
</dbReference>
<dbReference type="InterPro" id="IPR003593">
    <property type="entry name" value="AAA+_ATPase"/>
</dbReference>
<dbReference type="InterPro" id="IPR049945">
    <property type="entry name" value="AAA_22"/>
</dbReference>
<dbReference type="InterPro" id="IPR015163">
    <property type="entry name" value="Cdc6_C"/>
</dbReference>
<dbReference type="InterPro" id="IPR055237">
    <property type="entry name" value="Cdc6_lid"/>
</dbReference>
<dbReference type="InterPro" id="IPR050311">
    <property type="entry name" value="ORC1/CDC6"/>
</dbReference>
<dbReference type="InterPro" id="IPR014277">
    <property type="entry name" value="Orc1/Cdc6_arc"/>
</dbReference>
<dbReference type="InterPro" id="IPR027417">
    <property type="entry name" value="P-loop_NTPase"/>
</dbReference>
<dbReference type="InterPro" id="IPR036388">
    <property type="entry name" value="WH-like_DNA-bd_sf"/>
</dbReference>
<dbReference type="InterPro" id="IPR036390">
    <property type="entry name" value="WH_DNA-bd_sf"/>
</dbReference>
<dbReference type="NCBIfam" id="TIGR02928">
    <property type="entry name" value="orc1/cdc6 family replication initiation protein"/>
    <property type="match status" value="1"/>
</dbReference>
<dbReference type="NCBIfam" id="NF001625">
    <property type="entry name" value="PRK00411.1-3"/>
    <property type="match status" value="1"/>
</dbReference>
<dbReference type="PANTHER" id="PTHR10763:SF26">
    <property type="entry name" value="CELL DIVISION CONTROL PROTEIN 6 HOMOLOG"/>
    <property type="match status" value="1"/>
</dbReference>
<dbReference type="PANTHER" id="PTHR10763">
    <property type="entry name" value="CELL DIVISION CONTROL PROTEIN 6-RELATED"/>
    <property type="match status" value="1"/>
</dbReference>
<dbReference type="Pfam" id="PF13401">
    <property type="entry name" value="AAA_22"/>
    <property type="match status" value="1"/>
</dbReference>
<dbReference type="Pfam" id="PF09079">
    <property type="entry name" value="Cdc6_C"/>
    <property type="match status" value="1"/>
</dbReference>
<dbReference type="Pfam" id="PF22703">
    <property type="entry name" value="Cdc6_lid"/>
    <property type="match status" value="1"/>
</dbReference>
<dbReference type="SMART" id="SM00382">
    <property type="entry name" value="AAA"/>
    <property type="match status" value="1"/>
</dbReference>
<dbReference type="SMART" id="SM01074">
    <property type="entry name" value="Cdc6_C"/>
    <property type="match status" value="1"/>
</dbReference>
<dbReference type="SUPFAM" id="SSF52540">
    <property type="entry name" value="P-loop containing nucleoside triphosphate hydrolases"/>
    <property type="match status" value="1"/>
</dbReference>
<dbReference type="SUPFAM" id="SSF46785">
    <property type="entry name" value="Winged helix' DNA-binding domain"/>
    <property type="match status" value="1"/>
</dbReference>
<comment type="function">
    <text evidence="1">Involved in regulation of DNA replication.</text>
</comment>
<comment type="similarity">
    <text evidence="1">Belongs to the CDC6/cdc18 family.</text>
</comment>
<reference key="1">
    <citation type="journal article" date="2001" name="DNA Res.">
        <title>Complete genome sequence of an aerobic thermoacidophilic Crenarchaeon, Sulfolobus tokodaii strain7.</title>
        <authorList>
            <person name="Kawarabayasi Y."/>
            <person name="Hino Y."/>
            <person name="Horikawa H."/>
            <person name="Jin-no K."/>
            <person name="Takahashi M."/>
            <person name="Sekine M."/>
            <person name="Baba S."/>
            <person name="Ankai A."/>
            <person name="Kosugi H."/>
            <person name="Hosoyama A."/>
            <person name="Fukui S."/>
            <person name="Nagai Y."/>
            <person name="Nishijima K."/>
            <person name="Otsuka R."/>
            <person name="Nakazawa H."/>
            <person name="Takamiya M."/>
            <person name="Kato Y."/>
            <person name="Yoshizawa T."/>
            <person name="Tanaka T."/>
            <person name="Kudoh Y."/>
            <person name="Yamazaki J."/>
            <person name="Kushida N."/>
            <person name="Oguchi A."/>
            <person name="Aoki K."/>
            <person name="Masuda S."/>
            <person name="Yanagii M."/>
            <person name="Nishimura M."/>
            <person name="Yamagishi A."/>
            <person name="Oshima T."/>
            <person name="Kikuchi H."/>
        </authorList>
    </citation>
    <scope>NUCLEOTIDE SEQUENCE [LARGE SCALE GENOMIC DNA]</scope>
    <source>
        <strain>DSM 16993 / JCM 10545 / NBRC 100140 / 7</strain>
    </source>
</reference>
<sequence>MSKIIDEILSSLSRSRIFRNRELLLPDYVPEELPHREEQIKRLVEILSPLMRGEKPNNIFIYGLTGTGKTAVTKFVVKKLHEKISNSFIYVYINTRQTDTPYRILADLLENLGSKVPFTGISTAELYRRFIKKVLELKPILVIVLDEIDALVKKHGDDILYRLTRANYEMGKSKVSIIGITNDIKFVEFLDPRVKSSLSEEEIVFPPYNAEELEDILKRRATLAFYDSVVSDDVIKLCAAIAARDHGDARRALDLLRVAGEVAERDGAEKLTIEHVNKARVEIERDRVYEVVSTLPFHSKLVLLAIVIGVNEKRRTLTTGEVYDVYTKLAKKIGVESVTQRRVSDIINELDMLGIITARVVNRGRYGKTKEVNLAVNEETVIKAISEKDSKIASLWDR</sequence>
<protein>
    <recommendedName>
        <fullName evidence="1">ORC1-type DNA replication protein 1</fullName>
    </recommendedName>
</protein>
<evidence type="ECO:0000255" key="1">
    <source>
        <dbReference type="HAMAP-Rule" id="MF_01407"/>
    </source>
</evidence>
<keyword id="KW-0067">ATP-binding</keyword>
<keyword id="KW-0235">DNA replication</keyword>
<keyword id="KW-0547">Nucleotide-binding</keyword>
<keyword id="KW-1185">Reference proteome</keyword>
<proteinExistence type="inferred from homology"/>
<name>CDC61_SULTO</name>